<proteinExistence type="inferred from homology"/>
<accession>A2C0G1</accession>
<name>PSBM_PROM1</name>
<dbReference type="EMBL" id="CP000553">
    <property type="protein sequence ID" value="ABM74971.1"/>
    <property type="molecule type" value="Genomic_DNA"/>
</dbReference>
<dbReference type="RefSeq" id="WP_011294327.1">
    <property type="nucleotide sequence ID" value="NC_008819.1"/>
</dbReference>
<dbReference type="SMR" id="A2C0G1"/>
<dbReference type="KEGG" id="pme:NATL1_04071"/>
<dbReference type="eggNOG" id="ENOG5030KVU">
    <property type="taxonomic scope" value="Bacteria"/>
</dbReference>
<dbReference type="HOGENOM" id="CLU_215415_0_0_3"/>
<dbReference type="Proteomes" id="UP000002592">
    <property type="component" value="Chromosome"/>
</dbReference>
<dbReference type="GO" id="GO:0009523">
    <property type="term" value="C:photosystem II"/>
    <property type="evidence" value="ECO:0007669"/>
    <property type="project" value="UniProtKB-KW"/>
</dbReference>
<dbReference type="GO" id="GO:0031676">
    <property type="term" value="C:plasma membrane-derived thylakoid membrane"/>
    <property type="evidence" value="ECO:0007669"/>
    <property type="project" value="UniProtKB-SubCell"/>
</dbReference>
<dbReference type="GO" id="GO:0019684">
    <property type="term" value="P:photosynthesis, light reaction"/>
    <property type="evidence" value="ECO:0007669"/>
    <property type="project" value="InterPro"/>
</dbReference>
<dbReference type="HAMAP" id="MF_00438">
    <property type="entry name" value="PSII_PsbM"/>
    <property type="match status" value="1"/>
</dbReference>
<dbReference type="InterPro" id="IPR007826">
    <property type="entry name" value="PSII_PsbM"/>
</dbReference>
<dbReference type="InterPro" id="IPR037269">
    <property type="entry name" value="PSII_PsbM_sf"/>
</dbReference>
<dbReference type="NCBIfam" id="NF010694">
    <property type="entry name" value="PRK14094.1"/>
    <property type="match status" value="1"/>
</dbReference>
<dbReference type="NCBIfam" id="TIGR03038">
    <property type="entry name" value="PS_II_psbM"/>
    <property type="match status" value="1"/>
</dbReference>
<dbReference type="Pfam" id="PF05151">
    <property type="entry name" value="PsbM"/>
    <property type="match status" value="1"/>
</dbReference>
<dbReference type="SUPFAM" id="SSF161033">
    <property type="entry name" value="Photosystem II reaction center protein M, PsbM"/>
    <property type="match status" value="1"/>
</dbReference>
<organism>
    <name type="scientific">Prochlorococcus marinus (strain NATL1A)</name>
    <dbReference type="NCBI Taxonomy" id="167555"/>
    <lineage>
        <taxon>Bacteria</taxon>
        <taxon>Bacillati</taxon>
        <taxon>Cyanobacteriota</taxon>
        <taxon>Cyanophyceae</taxon>
        <taxon>Synechococcales</taxon>
        <taxon>Prochlorococcaceae</taxon>
        <taxon>Prochlorococcus</taxon>
    </lineage>
</organism>
<comment type="function">
    <text evidence="1">One of the components of the core complex of photosystem II (PSII). PSII is a light-driven water:plastoquinone oxidoreductase that uses light energy to abstract electrons from H(2)O, generating O(2) and a proton gradient subsequently used for ATP formation. It consists of a core antenna complex that captures photons, and an electron transfer chain that converts photonic excitation into a charge separation. This subunit is found at the monomer-monomer interface.</text>
</comment>
<comment type="subunit">
    <text evidence="3">PSII is composed of 1 copy each of membrane proteins PsbA, PsbB, PsbC, PsbD, PsbE, PsbF, PsbH, PsbI, PsbJ, PsbK, PsbL, PsbM, PsbT, PsbX, PsbY, Psb30/Ycf12, peripheral proteins PsbO, CyanoQ (PsbQ), PsbU, PsbV and a large number of cofactors. It forms dimeric complexes.</text>
</comment>
<comment type="subcellular location">
    <subcellularLocation>
        <location evidence="1">Cellular thylakoid membrane</location>
        <topology evidence="1">Single-pass membrane protein</topology>
    </subcellularLocation>
</comment>
<comment type="similarity">
    <text evidence="1">Belongs to the PsbM family.</text>
</comment>
<protein>
    <recommendedName>
        <fullName evidence="1">Photosystem II reaction center protein M</fullName>
        <shortName evidence="1">PSII-M</shortName>
    </recommendedName>
</protein>
<reference key="1">
    <citation type="journal article" date="2007" name="PLoS Genet.">
        <title>Patterns and implications of gene gain and loss in the evolution of Prochlorococcus.</title>
        <authorList>
            <person name="Kettler G.C."/>
            <person name="Martiny A.C."/>
            <person name="Huang K."/>
            <person name="Zucker J."/>
            <person name="Coleman M.L."/>
            <person name="Rodrigue S."/>
            <person name="Chen F."/>
            <person name="Lapidus A."/>
            <person name="Ferriera S."/>
            <person name="Johnson J."/>
            <person name="Steglich C."/>
            <person name="Church G.M."/>
            <person name="Richardson P."/>
            <person name="Chisholm S.W."/>
        </authorList>
    </citation>
    <scope>NUCLEOTIDE SEQUENCE [LARGE SCALE GENOMIC DNA]</scope>
    <source>
        <strain>NATL1A</strain>
    </source>
</reference>
<evidence type="ECO:0000255" key="1">
    <source>
        <dbReference type="HAMAP-Rule" id="MF_00438"/>
    </source>
</evidence>
<evidence type="ECO:0000256" key="2">
    <source>
        <dbReference type="SAM" id="MobiDB-lite"/>
    </source>
</evidence>
<evidence type="ECO:0000305" key="3"/>
<feature type="chain" id="PRO_0000325712" description="Photosystem II reaction center protein M">
    <location>
        <begin position="1"/>
        <end position="52"/>
    </location>
</feature>
<feature type="transmembrane region" description="Helical" evidence="1">
    <location>
        <begin position="6"/>
        <end position="26"/>
    </location>
</feature>
<feature type="region of interest" description="Disordered" evidence="2">
    <location>
        <begin position="31"/>
        <end position="52"/>
    </location>
</feature>
<feature type="compositionally biased region" description="Basic and acidic residues" evidence="2">
    <location>
        <begin position="42"/>
        <end position="52"/>
    </location>
</feature>
<keyword id="KW-0472">Membrane</keyword>
<keyword id="KW-0602">Photosynthesis</keyword>
<keyword id="KW-0604">Photosystem II</keyword>
<keyword id="KW-0674">Reaction center</keyword>
<keyword id="KW-0793">Thylakoid</keyword>
<keyword id="KW-0812">Transmembrane</keyword>
<keyword id="KW-1133">Transmembrane helix</keyword>
<sequence length="52" mass="5579">METTSFGFAASLLFVGVPTIFLIGLFVSTSDGEKSSFYSDTSKGRLSPEPKK</sequence>
<gene>
    <name evidence="1" type="primary">psbM</name>
    <name type="ordered locus">NATL1_04071</name>
</gene>